<protein>
    <recommendedName>
        <fullName evidence="1">Co-chaperonin GroES</fullName>
    </recommendedName>
    <alternativeName>
        <fullName evidence="1">10 kDa chaperonin</fullName>
    </alternativeName>
    <alternativeName>
        <fullName evidence="1">Chaperonin-10</fullName>
        <shortName evidence="1">Cpn10</shortName>
    </alternativeName>
</protein>
<feature type="chain" id="PRO_0000174864" description="Co-chaperonin GroES">
    <location>
        <begin position="1"/>
        <end position="94"/>
    </location>
</feature>
<comment type="function">
    <text evidence="1">Together with the chaperonin GroEL, plays an essential role in assisting protein folding. The GroEL-GroES system forms a nano-cage that allows encapsulation of the non-native substrate proteins and provides a physical environment optimized to promote and accelerate protein folding. GroES binds to the apical surface of the GroEL ring, thereby capping the opening of the GroEL channel.</text>
</comment>
<comment type="subunit">
    <text evidence="1">Heptamer of 7 subunits arranged in a ring. Interacts with the chaperonin GroEL.</text>
</comment>
<comment type="subcellular location">
    <subcellularLocation>
        <location evidence="1">Cytoplasm</location>
    </subcellularLocation>
</comment>
<comment type="similarity">
    <text evidence="1">Belongs to the GroES chaperonin family.</text>
</comment>
<name>CH10_STRMT</name>
<organism>
    <name type="scientific">Streptococcus mitis</name>
    <dbReference type="NCBI Taxonomy" id="28037"/>
    <lineage>
        <taxon>Bacteria</taxon>
        <taxon>Bacillati</taxon>
        <taxon>Bacillota</taxon>
        <taxon>Bacilli</taxon>
        <taxon>Lactobacillales</taxon>
        <taxon>Streptococcaceae</taxon>
        <taxon>Streptococcus</taxon>
        <taxon>Streptococcus mitis group</taxon>
    </lineage>
</organism>
<dbReference type="EMBL" id="AF417589">
    <property type="protein sequence ID" value="AAN32682.1"/>
    <property type="molecule type" value="Genomic_DNA"/>
</dbReference>
<dbReference type="RefSeq" id="WP_000917337.1">
    <property type="nucleotide sequence ID" value="NZ_WIJL01000005.1"/>
</dbReference>
<dbReference type="SMR" id="Q8GBB7"/>
<dbReference type="OrthoDB" id="9806791at2"/>
<dbReference type="GO" id="GO:0005737">
    <property type="term" value="C:cytoplasm"/>
    <property type="evidence" value="ECO:0007669"/>
    <property type="project" value="UniProtKB-SubCell"/>
</dbReference>
<dbReference type="GO" id="GO:0005524">
    <property type="term" value="F:ATP binding"/>
    <property type="evidence" value="ECO:0007669"/>
    <property type="project" value="InterPro"/>
</dbReference>
<dbReference type="GO" id="GO:0046872">
    <property type="term" value="F:metal ion binding"/>
    <property type="evidence" value="ECO:0007669"/>
    <property type="project" value="TreeGrafter"/>
</dbReference>
<dbReference type="GO" id="GO:0044183">
    <property type="term" value="F:protein folding chaperone"/>
    <property type="evidence" value="ECO:0007669"/>
    <property type="project" value="InterPro"/>
</dbReference>
<dbReference type="GO" id="GO:0051087">
    <property type="term" value="F:protein-folding chaperone binding"/>
    <property type="evidence" value="ECO:0007669"/>
    <property type="project" value="TreeGrafter"/>
</dbReference>
<dbReference type="GO" id="GO:0051082">
    <property type="term" value="F:unfolded protein binding"/>
    <property type="evidence" value="ECO:0007669"/>
    <property type="project" value="TreeGrafter"/>
</dbReference>
<dbReference type="GO" id="GO:0051085">
    <property type="term" value="P:chaperone cofactor-dependent protein refolding"/>
    <property type="evidence" value="ECO:0007669"/>
    <property type="project" value="TreeGrafter"/>
</dbReference>
<dbReference type="CDD" id="cd00320">
    <property type="entry name" value="cpn10"/>
    <property type="match status" value="1"/>
</dbReference>
<dbReference type="FunFam" id="2.30.33.40:FF:000007">
    <property type="entry name" value="10 kDa chaperonin"/>
    <property type="match status" value="1"/>
</dbReference>
<dbReference type="Gene3D" id="2.30.33.40">
    <property type="entry name" value="GroES chaperonin"/>
    <property type="match status" value="1"/>
</dbReference>
<dbReference type="HAMAP" id="MF_00580">
    <property type="entry name" value="CH10"/>
    <property type="match status" value="1"/>
</dbReference>
<dbReference type="InterPro" id="IPR020818">
    <property type="entry name" value="Chaperonin_GroES"/>
</dbReference>
<dbReference type="InterPro" id="IPR037124">
    <property type="entry name" value="Chaperonin_GroES_sf"/>
</dbReference>
<dbReference type="InterPro" id="IPR018369">
    <property type="entry name" value="Chaprnonin_Cpn10_CS"/>
</dbReference>
<dbReference type="InterPro" id="IPR011032">
    <property type="entry name" value="GroES-like_sf"/>
</dbReference>
<dbReference type="NCBIfam" id="NF001528">
    <property type="entry name" value="PRK00364.1-4"/>
    <property type="match status" value="1"/>
</dbReference>
<dbReference type="PANTHER" id="PTHR10772">
    <property type="entry name" value="10 KDA HEAT SHOCK PROTEIN"/>
    <property type="match status" value="1"/>
</dbReference>
<dbReference type="PANTHER" id="PTHR10772:SF58">
    <property type="entry name" value="CO-CHAPERONIN GROES"/>
    <property type="match status" value="1"/>
</dbReference>
<dbReference type="Pfam" id="PF00166">
    <property type="entry name" value="Cpn10"/>
    <property type="match status" value="1"/>
</dbReference>
<dbReference type="PRINTS" id="PR00297">
    <property type="entry name" value="CHAPERONIN10"/>
</dbReference>
<dbReference type="SMART" id="SM00883">
    <property type="entry name" value="Cpn10"/>
    <property type="match status" value="1"/>
</dbReference>
<dbReference type="SUPFAM" id="SSF50129">
    <property type="entry name" value="GroES-like"/>
    <property type="match status" value="1"/>
</dbReference>
<dbReference type="PROSITE" id="PS00681">
    <property type="entry name" value="CHAPERONINS_CPN10"/>
    <property type="match status" value="1"/>
</dbReference>
<keyword id="KW-0143">Chaperone</keyword>
<keyword id="KW-0963">Cytoplasm</keyword>
<sequence>MLKPLGDRVVLKVEEKEQTVGGFVLAGSAQEKTKTAQVVATGQGVRTLNGDLVAPSVKAGDRVLVEAHAGLDVKDGDEKYIIVGEANILAIIEK</sequence>
<evidence type="ECO:0000255" key="1">
    <source>
        <dbReference type="HAMAP-Rule" id="MF_00580"/>
    </source>
</evidence>
<gene>
    <name evidence="1" type="primary">groES</name>
    <name evidence="1" type="synonym">groS</name>
</gene>
<reference key="1">
    <citation type="submission" date="2001-09" db="EMBL/GenBank/DDBJ databases">
        <title>groESL sequences in Streptococcus mitis ATCC 49456.</title>
        <authorList>
            <person name="Teng L.-J."/>
        </authorList>
    </citation>
    <scope>NUCLEOTIDE SEQUENCE [GENOMIC DNA]</scope>
    <source>
        <strain>ATCC 49456 / DSM 12643 / LMG 14557 / NCTC 12261</strain>
    </source>
</reference>
<accession>Q8GBB7</accession>
<proteinExistence type="inferred from homology"/>